<feature type="chain" id="PRO_1000065430" description="Ribulose bisphosphate carboxylase">
    <location>
        <begin position="1"/>
        <end position="428"/>
    </location>
</feature>
<feature type="active site" description="Proton acceptor" evidence="1">
    <location>
        <position position="151"/>
    </location>
</feature>
<feature type="active site" description="Proton acceptor" evidence="1">
    <location>
        <position position="270"/>
    </location>
</feature>
<feature type="binding site" evidence="1">
    <location>
        <position position="153"/>
    </location>
    <ligand>
        <name>substrate</name>
    </ligand>
</feature>
<feature type="binding site" description="via carbamate group" evidence="1">
    <location>
        <position position="177"/>
    </location>
    <ligand>
        <name>Mg(2+)</name>
        <dbReference type="ChEBI" id="CHEBI:18420"/>
    </ligand>
</feature>
<feature type="binding site" evidence="1">
    <location>
        <position position="179"/>
    </location>
    <ligand>
        <name>Mg(2+)</name>
        <dbReference type="ChEBI" id="CHEBI:18420"/>
    </ligand>
</feature>
<feature type="binding site" evidence="1">
    <location>
        <position position="180"/>
    </location>
    <ligand>
        <name>Mg(2+)</name>
        <dbReference type="ChEBI" id="CHEBI:18420"/>
    </ligand>
</feature>
<feature type="binding site" evidence="1">
    <location>
        <position position="271"/>
    </location>
    <ligand>
        <name>substrate</name>
    </ligand>
</feature>
<feature type="binding site" evidence="1">
    <location>
        <position position="303"/>
    </location>
    <ligand>
        <name>substrate</name>
    </ligand>
</feature>
<feature type="binding site" evidence="1">
    <location>
        <begin position="354"/>
        <end position="356"/>
    </location>
    <ligand>
        <name>substrate</name>
    </ligand>
</feature>
<feature type="binding site" evidence="1">
    <location>
        <begin position="376"/>
        <end position="379"/>
    </location>
    <ligand>
        <name>substrate</name>
    </ligand>
</feature>
<feature type="site" description="Transition state stabilizer" evidence="1">
    <location>
        <position position="310"/>
    </location>
</feature>
<feature type="modified residue" description="N6-carboxylysine" evidence="1">
    <location>
        <position position="177"/>
    </location>
</feature>
<organism>
    <name type="scientific">Methanosarcina barkeri (strain Fusaro / DSM 804)</name>
    <dbReference type="NCBI Taxonomy" id="269797"/>
    <lineage>
        <taxon>Archaea</taxon>
        <taxon>Methanobacteriati</taxon>
        <taxon>Methanobacteriota</taxon>
        <taxon>Stenosarchaea group</taxon>
        <taxon>Methanomicrobia</taxon>
        <taxon>Methanosarcinales</taxon>
        <taxon>Methanosarcinaceae</taxon>
        <taxon>Methanosarcina</taxon>
    </lineage>
</organism>
<protein>
    <recommendedName>
        <fullName evidence="1">Ribulose bisphosphate carboxylase</fullName>
        <shortName evidence="1">RuBisCO</shortName>
        <ecNumber evidence="1">4.1.1.39</ecNumber>
    </recommendedName>
</protein>
<reference key="1">
    <citation type="journal article" date="2006" name="J. Bacteriol.">
        <title>The Methanosarcina barkeri genome: comparative analysis with Methanosarcina acetivorans and Methanosarcina mazei reveals extensive rearrangement within methanosarcinal genomes.</title>
        <authorList>
            <person name="Maeder D.L."/>
            <person name="Anderson I."/>
            <person name="Brettin T.S."/>
            <person name="Bruce D.C."/>
            <person name="Gilna P."/>
            <person name="Han C.S."/>
            <person name="Lapidus A."/>
            <person name="Metcalf W.W."/>
            <person name="Saunders E."/>
            <person name="Tapia R."/>
            <person name="Sowers K.R."/>
        </authorList>
    </citation>
    <scope>NUCLEOTIDE SEQUENCE [LARGE SCALE GENOMIC DNA]</scope>
    <source>
        <strain>Fusaro / DSM 804</strain>
    </source>
</reference>
<sequence>MQRDYIDAGYSPKDTDLICEFHIEPSAGVNFEEAATHMAGESSIDSWTEIATLSPELAARLKPHVFYMDEDAQTVRVAYSEELFELGSVPQVLSAVAGNILSMKIVDNLRLQDIAFPKSMLREFKGPGFGLSGIRELTGVQDRPLIGTIVKPKVGLTSEKHAEVAYNSFAGGCDLVKDDENLTDQKFNKFEKRAELTLKLAEKAESETGERKMYLCNITAPTCKEMIRRMNILKDLGASYAMIDIVPAGWTALQTLREEADDAGLALHAHRCMHSAYTRNPRHGISMLVVAKLCRLIGLDQLHIGTVVGKMHGEKHEVLSLRDECVLDNVPADESQHVLAQDWGGLKPMFPVASGGLAPTMIPDLYTIFGRDVIMQFGGGIHAHPMGTKAGAAACRQALEASLEGVSLQEYAKNHRELEAAINKWLKK</sequence>
<comment type="function">
    <text evidence="1">Catalyzes the addition of molecular CO(2) and H(2)O to ribulose 1,5-bisphosphate (RuBP), generating two molecules of 3-phosphoglycerate (3-PGA). Functions in an archaeal AMP degradation pathway, together with AMP phosphorylase and R15P isomerase.</text>
</comment>
<comment type="catalytic activity">
    <reaction evidence="1">
        <text>2 (2R)-3-phosphoglycerate + 2 H(+) = D-ribulose 1,5-bisphosphate + CO2 + H2O</text>
        <dbReference type="Rhea" id="RHEA:23124"/>
        <dbReference type="ChEBI" id="CHEBI:15377"/>
        <dbReference type="ChEBI" id="CHEBI:15378"/>
        <dbReference type="ChEBI" id="CHEBI:16526"/>
        <dbReference type="ChEBI" id="CHEBI:57870"/>
        <dbReference type="ChEBI" id="CHEBI:58272"/>
        <dbReference type="EC" id="4.1.1.39"/>
    </reaction>
</comment>
<comment type="catalytic activity">
    <reaction evidence="1">
        <text>D-ribulose 1,5-bisphosphate + O2 = 2-phosphoglycolate + (2R)-3-phosphoglycerate + 2 H(+)</text>
        <dbReference type="Rhea" id="RHEA:36631"/>
        <dbReference type="ChEBI" id="CHEBI:15378"/>
        <dbReference type="ChEBI" id="CHEBI:15379"/>
        <dbReference type="ChEBI" id="CHEBI:57870"/>
        <dbReference type="ChEBI" id="CHEBI:58033"/>
        <dbReference type="ChEBI" id="CHEBI:58272"/>
    </reaction>
</comment>
<comment type="cofactor">
    <cofactor evidence="1">
        <name>Mg(2+)</name>
        <dbReference type="ChEBI" id="CHEBI:18420"/>
    </cofactor>
    <text evidence="1">Binds 1 Mg(2+) ion per subunit.</text>
</comment>
<comment type="subunit">
    <text evidence="1">Homodimer or homodecamer. In contrast to form I RuBisCO, the form III RuBisCO is composed solely of large subunits.</text>
</comment>
<comment type="miscellaneous">
    <text evidence="1">Because the Archaea possessing a type III RuBisCO are all anaerobic, it is most likely that only the carboxylase activity of RuBisCO, and not the competitive oxygenase activity (by which RuBP reacts with O(2) to form one molecule of 3-phosphoglycerate and one molecule of 2-phosphoglycolate), is biologically relevant in these strains.</text>
</comment>
<comment type="similarity">
    <text evidence="1">Belongs to the RuBisCO large chain family. Type III subfamily.</text>
</comment>
<keyword id="KW-0120">Carbon dioxide fixation</keyword>
<keyword id="KW-0456">Lyase</keyword>
<keyword id="KW-0460">Magnesium</keyword>
<keyword id="KW-0479">Metal-binding</keyword>
<keyword id="KW-0560">Oxidoreductase</keyword>
<evidence type="ECO:0000255" key="1">
    <source>
        <dbReference type="HAMAP-Rule" id="MF_01133"/>
    </source>
</evidence>
<dbReference type="EC" id="4.1.1.39" evidence="1"/>
<dbReference type="EMBL" id="CP000099">
    <property type="protein sequence ID" value="AAZ69876.1"/>
    <property type="molecule type" value="Genomic_DNA"/>
</dbReference>
<dbReference type="SMR" id="Q46E16"/>
<dbReference type="STRING" id="269797.Mbar_A0902"/>
<dbReference type="PaxDb" id="269797-Mbar_A0902"/>
<dbReference type="KEGG" id="mba:Mbar_A0902"/>
<dbReference type="eggNOG" id="arCOG04443">
    <property type="taxonomic scope" value="Archaea"/>
</dbReference>
<dbReference type="HOGENOM" id="CLU_031450_3_1_2"/>
<dbReference type="OrthoDB" id="52787at2157"/>
<dbReference type="GO" id="GO:0000287">
    <property type="term" value="F:magnesium ion binding"/>
    <property type="evidence" value="ECO:0007669"/>
    <property type="project" value="UniProtKB-UniRule"/>
</dbReference>
<dbReference type="GO" id="GO:0016491">
    <property type="term" value="F:oxidoreductase activity"/>
    <property type="evidence" value="ECO:0007669"/>
    <property type="project" value="UniProtKB-KW"/>
</dbReference>
<dbReference type="GO" id="GO:0016984">
    <property type="term" value="F:ribulose-bisphosphate carboxylase activity"/>
    <property type="evidence" value="ECO:0007669"/>
    <property type="project" value="UniProtKB-UniRule"/>
</dbReference>
<dbReference type="GO" id="GO:0006196">
    <property type="term" value="P:AMP catabolic process"/>
    <property type="evidence" value="ECO:0007669"/>
    <property type="project" value="UniProtKB-UniRule"/>
</dbReference>
<dbReference type="GO" id="GO:0015977">
    <property type="term" value="P:carbon fixation"/>
    <property type="evidence" value="ECO:0007669"/>
    <property type="project" value="UniProtKB-KW"/>
</dbReference>
<dbReference type="CDD" id="cd08213">
    <property type="entry name" value="RuBisCO_large_III"/>
    <property type="match status" value="1"/>
</dbReference>
<dbReference type="Gene3D" id="3.20.20.110">
    <property type="entry name" value="Ribulose bisphosphate carboxylase, large subunit, C-terminal domain"/>
    <property type="match status" value="1"/>
</dbReference>
<dbReference type="Gene3D" id="3.30.70.150">
    <property type="entry name" value="RuBisCO large subunit, N-terminal domain"/>
    <property type="match status" value="1"/>
</dbReference>
<dbReference type="HAMAP" id="MF_01133">
    <property type="entry name" value="RuBisCO_L_type3"/>
    <property type="match status" value="1"/>
</dbReference>
<dbReference type="InterPro" id="IPR033966">
    <property type="entry name" value="RuBisCO"/>
</dbReference>
<dbReference type="InterPro" id="IPR017712">
    <property type="entry name" value="RuBisCO_III"/>
</dbReference>
<dbReference type="InterPro" id="IPR000685">
    <property type="entry name" value="RuBisCO_lsu_C"/>
</dbReference>
<dbReference type="InterPro" id="IPR036376">
    <property type="entry name" value="RuBisCO_lsu_C_sf"/>
</dbReference>
<dbReference type="InterPro" id="IPR017443">
    <property type="entry name" value="RuBisCO_lsu_fd_N"/>
</dbReference>
<dbReference type="InterPro" id="IPR036422">
    <property type="entry name" value="RuBisCO_lsu_N_sf"/>
</dbReference>
<dbReference type="NCBIfam" id="NF003252">
    <property type="entry name" value="PRK04208.1"/>
    <property type="match status" value="1"/>
</dbReference>
<dbReference type="NCBIfam" id="TIGR03326">
    <property type="entry name" value="rubisco_III"/>
    <property type="match status" value="1"/>
</dbReference>
<dbReference type="PANTHER" id="PTHR42704">
    <property type="entry name" value="RIBULOSE BISPHOSPHATE CARBOXYLASE"/>
    <property type="match status" value="1"/>
</dbReference>
<dbReference type="PANTHER" id="PTHR42704:SF17">
    <property type="entry name" value="RIBULOSE BISPHOSPHATE CARBOXYLASE LARGE CHAIN"/>
    <property type="match status" value="1"/>
</dbReference>
<dbReference type="Pfam" id="PF00016">
    <property type="entry name" value="RuBisCO_large"/>
    <property type="match status" value="1"/>
</dbReference>
<dbReference type="Pfam" id="PF02788">
    <property type="entry name" value="RuBisCO_large_N"/>
    <property type="match status" value="1"/>
</dbReference>
<dbReference type="SFLD" id="SFLDS00014">
    <property type="entry name" value="RuBisCO"/>
    <property type="match status" value="1"/>
</dbReference>
<dbReference type="SFLD" id="SFLDG00301">
    <property type="entry name" value="RuBisCO-like_proteins"/>
    <property type="match status" value="1"/>
</dbReference>
<dbReference type="SUPFAM" id="SSF51649">
    <property type="entry name" value="RuBisCo, C-terminal domain"/>
    <property type="match status" value="1"/>
</dbReference>
<dbReference type="SUPFAM" id="SSF54966">
    <property type="entry name" value="RuBisCO, large subunit, small (N-terminal) domain"/>
    <property type="match status" value="1"/>
</dbReference>
<name>RBL_METBF</name>
<gene>
    <name evidence="1" type="primary">rbcL</name>
    <name type="ordered locus">Mbar_A0902</name>
</gene>
<accession>Q46E16</accession>
<proteinExistence type="inferred from homology"/>